<feature type="signal peptide" evidence="1">
    <location>
        <begin position="1"/>
        <end position="25"/>
    </location>
</feature>
<feature type="chain" id="PRO_0000027551" description="Complement factor B">
    <location>
        <begin position="26"/>
        <end position="764"/>
    </location>
</feature>
<feature type="chain" id="PRO_0000027552" description="Complement factor B Ba">
    <location>
        <begin position="26"/>
        <end position="259"/>
    </location>
</feature>
<feature type="chain" id="PRO_0000027553" description="Complement factor B Bb">
    <location>
        <begin position="260"/>
        <end position="764"/>
    </location>
</feature>
<feature type="domain" description="Sushi 1" evidence="5">
    <location>
        <begin position="35"/>
        <end position="100"/>
    </location>
</feature>
<feature type="domain" description="Sushi 2" evidence="5">
    <location>
        <begin position="101"/>
        <end position="160"/>
    </location>
</feature>
<feature type="domain" description="Sushi 3" evidence="5">
    <location>
        <begin position="163"/>
        <end position="220"/>
    </location>
</feature>
<feature type="domain" description="VWFA" evidence="3">
    <location>
        <begin position="270"/>
        <end position="469"/>
    </location>
</feature>
<feature type="domain" description="Peptidase S1" evidence="4">
    <location>
        <begin position="477"/>
        <end position="757"/>
    </location>
</feature>
<feature type="active site" description="Charge relay system" evidence="4">
    <location>
        <position position="526"/>
    </location>
</feature>
<feature type="active site" description="Charge relay system" evidence="4">
    <location>
        <position position="576"/>
    </location>
</feature>
<feature type="active site" description="Charge relay system" evidence="4">
    <location>
        <position position="699"/>
    </location>
</feature>
<feature type="binding site" evidence="1">
    <location>
        <position position="278"/>
    </location>
    <ligand>
        <name>Mg(2+)</name>
        <dbReference type="ChEBI" id="CHEBI:18420"/>
    </ligand>
</feature>
<feature type="binding site" evidence="1">
    <location>
        <position position="280"/>
    </location>
    <ligand>
        <name>Mg(2+)</name>
        <dbReference type="ChEBI" id="CHEBI:18420"/>
    </ligand>
</feature>
<feature type="binding site" evidence="1">
    <location>
        <position position="353"/>
    </location>
    <ligand>
        <name>Mg(2+)</name>
        <dbReference type="ChEBI" id="CHEBI:18420"/>
    </ligand>
</feature>
<feature type="site" description="Cleavage; by CFD" evidence="1">
    <location>
        <begin position="259"/>
        <end position="260"/>
    </location>
</feature>
<feature type="glycosylation site" description="N-linked (GlcNAc...) asparagine" evidence="2">
    <location>
        <position position="122"/>
    </location>
</feature>
<feature type="glycosylation site" description="N-linked (GlcNAc...) asparagine" evidence="2">
    <location>
        <position position="142"/>
    </location>
</feature>
<feature type="glycosylation site" description="N-linked (GlcNAc...) asparagine" evidence="2">
    <location>
        <position position="285"/>
    </location>
</feature>
<feature type="glycosylation site" description="N-linked (GlcNAc...) asparagine" evidence="2">
    <location>
        <position position="378"/>
    </location>
</feature>
<feature type="disulfide bond" evidence="4">
    <location>
        <begin position="37"/>
        <end position="76"/>
    </location>
</feature>
<feature type="disulfide bond" evidence="4">
    <location>
        <begin position="62"/>
        <end position="98"/>
    </location>
</feature>
<feature type="disulfide bond" evidence="4">
    <location>
        <begin position="103"/>
        <end position="145"/>
    </location>
</feature>
<feature type="disulfide bond" evidence="4">
    <location>
        <begin position="131"/>
        <end position="158"/>
    </location>
</feature>
<feature type="disulfide bond" evidence="4">
    <location>
        <begin position="165"/>
        <end position="205"/>
    </location>
</feature>
<feature type="disulfide bond" evidence="4">
    <location>
        <begin position="191"/>
        <end position="218"/>
    </location>
</feature>
<feature type="disulfide bond" evidence="1">
    <location>
        <begin position="478"/>
        <end position="596"/>
    </location>
</feature>
<feature type="disulfide bond" evidence="4">
    <location>
        <begin position="511"/>
        <end position="527"/>
    </location>
</feature>
<feature type="disulfide bond" evidence="1">
    <location>
        <begin position="599"/>
        <end position="615"/>
    </location>
</feature>
<feature type="disulfide bond" evidence="1">
    <location>
        <begin position="656"/>
        <end position="682"/>
    </location>
</feature>
<feature type="disulfide bond" evidence="4">
    <location>
        <begin position="695"/>
        <end position="725"/>
    </location>
</feature>
<gene>
    <name type="primary">CFB</name>
    <name type="synonym">BF</name>
</gene>
<keyword id="KW-0165">Cleavage on pair of basic residues</keyword>
<keyword id="KW-0179">Complement alternate pathway</keyword>
<keyword id="KW-1015">Disulfide bond</keyword>
<keyword id="KW-0325">Glycoprotein</keyword>
<keyword id="KW-0378">Hydrolase</keyword>
<keyword id="KW-0391">Immunity</keyword>
<keyword id="KW-0399">Innate immunity</keyword>
<keyword id="KW-0460">Magnesium</keyword>
<keyword id="KW-0479">Metal-binding</keyword>
<keyword id="KW-0645">Protease</keyword>
<keyword id="KW-1185">Reference proteome</keyword>
<keyword id="KW-0677">Repeat</keyword>
<keyword id="KW-0964">Secreted</keyword>
<keyword id="KW-0720">Serine protease</keyword>
<keyword id="KW-0732">Signal</keyword>
<keyword id="KW-0768">Sushi</keyword>
<keyword id="KW-0865">Zymogen</keyword>
<accession>Q864W0</accession>
<protein>
    <recommendedName>
        <fullName>Complement factor B</fullName>
        <ecNumber evidence="1">3.4.21.47</ecNumber>
    </recommendedName>
    <alternativeName>
        <fullName>C3/C5 convertase</fullName>
    </alternativeName>
    <component>
        <recommendedName>
            <fullName>Complement factor B Ba</fullName>
        </recommendedName>
    </component>
    <component>
        <recommendedName>
            <fullName>Complement factor B Bb</fullName>
        </recommendedName>
    </component>
</protein>
<evidence type="ECO:0000250" key="1">
    <source>
        <dbReference type="UniProtKB" id="P00751"/>
    </source>
</evidence>
<evidence type="ECO:0000255" key="2"/>
<evidence type="ECO:0000255" key="3">
    <source>
        <dbReference type="PROSITE-ProRule" id="PRU00219"/>
    </source>
</evidence>
<evidence type="ECO:0000255" key="4">
    <source>
        <dbReference type="PROSITE-ProRule" id="PRU00274"/>
    </source>
</evidence>
<evidence type="ECO:0000255" key="5">
    <source>
        <dbReference type="PROSITE-ProRule" id="PRU00302"/>
    </source>
</evidence>
<proteinExistence type="inferred from homology"/>
<dbReference type="EC" id="3.4.21.47" evidence="1"/>
<dbReference type="EMBL" id="AY074663">
    <property type="protein sequence ID" value="AAM10004.1"/>
    <property type="molecule type" value="Genomic_DNA"/>
</dbReference>
<dbReference type="RefSeq" id="NP_001009169.1">
    <property type="nucleotide sequence ID" value="NM_001009169.1"/>
</dbReference>
<dbReference type="SMR" id="Q864W0"/>
<dbReference type="FunCoup" id="Q864W0">
    <property type="interactions" value="224"/>
</dbReference>
<dbReference type="STRING" id="9598.ENSPTRP00000076687"/>
<dbReference type="MEROPS" id="S01.196"/>
<dbReference type="GlyCosmos" id="Q864W0">
    <property type="glycosylation" value="4 sites, No reported glycans"/>
</dbReference>
<dbReference type="PaxDb" id="9598-ENSPTRP00000030715"/>
<dbReference type="Ensembl" id="ENSPTRT00000033244.5">
    <property type="protein sequence ID" value="ENSPTRP00000030715.4"/>
    <property type="gene ID" value="ENSPTRG00000017994.6"/>
</dbReference>
<dbReference type="GeneID" id="494140"/>
<dbReference type="KEGG" id="ptr:494140"/>
<dbReference type="CTD" id="629"/>
<dbReference type="VGNC" id="VGNC:11038">
    <property type="gene designation" value="C2"/>
</dbReference>
<dbReference type="eggNOG" id="KOG3627">
    <property type="taxonomic scope" value="Eukaryota"/>
</dbReference>
<dbReference type="GeneTree" id="ENSGT00940000158605"/>
<dbReference type="HOGENOM" id="CLU_022004_1_0_1"/>
<dbReference type="InParanoid" id="Q864W0"/>
<dbReference type="OrthoDB" id="1408at9604"/>
<dbReference type="TreeFam" id="TF330194"/>
<dbReference type="Proteomes" id="UP000002277">
    <property type="component" value="Chromosome 6"/>
</dbReference>
<dbReference type="Bgee" id="ENSPTRG00000017994">
    <property type="expression patterns" value="Expressed in liver and 21 other cell types or tissues"/>
</dbReference>
<dbReference type="GO" id="GO:0005576">
    <property type="term" value="C:extracellular region"/>
    <property type="evidence" value="ECO:0007669"/>
    <property type="project" value="UniProtKB-SubCell"/>
</dbReference>
<dbReference type="GO" id="GO:0004252">
    <property type="term" value="F:serine-type endopeptidase activity"/>
    <property type="evidence" value="ECO:0007669"/>
    <property type="project" value="UniProtKB-EC"/>
</dbReference>
<dbReference type="GO" id="GO:0006956">
    <property type="term" value="P:complement activation"/>
    <property type="evidence" value="ECO:0000318"/>
    <property type="project" value="GO_Central"/>
</dbReference>
<dbReference type="GO" id="GO:0006957">
    <property type="term" value="P:complement activation, alternative pathway"/>
    <property type="evidence" value="ECO:0007669"/>
    <property type="project" value="UniProtKB-KW"/>
</dbReference>
<dbReference type="GO" id="GO:0006508">
    <property type="term" value="P:proteolysis"/>
    <property type="evidence" value="ECO:0007669"/>
    <property type="project" value="UniProtKB-KW"/>
</dbReference>
<dbReference type="GO" id="GO:0009617">
    <property type="term" value="P:response to bacterium"/>
    <property type="evidence" value="ECO:0000318"/>
    <property type="project" value="GO_Central"/>
</dbReference>
<dbReference type="CDD" id="cd00033">
    <property type="entry name" value="CCP"/>
    <property type="match status" value="3"/>
</dbReference>
<dbReference type="CDD" id="cd00190">
    <property type="entry name" value="Tryp_SPc"/>
    <property type="match status" value="1"/>
</dbReference>
<dbReference type="CDD" id="cd01470">
    <property type="entry name" value="vWA_complement_factors"/>
    <property type="match status" value="1"/>
</dbReference>
<dbReference type="FunFam" id="2.10.70.10:FF:000052">
    <property type="entry name" value="Complement factor B"/>
    <property type="match status" value="1"/>
</dbReference>
<dbReference type="FunFam" id="2.40.10.120:FF:000009">
    <property type="entry name" value="Complement factor B"/>
    <property type="match status" value="1"/>
</dbReference>
<dbReference type="FunFam" id="3.40.50.410:FF:000056">
    <property type="entry name" value="Complement factor B"/>
    <property type="match status" value="1"/>
</dbReference>
<dbReference type="FunFam" id="2.10.70.10:FF:000019">
    <property type="entry name" value="Complement factor b,-like"/>
    <property type="match status" value="2"/>
</dbReference>
<dbReference type="Gene3D" id="2.40.10.120">
    <property type="match status" value="1"/>
</dbReference>
<dbReference type="Gene3D" id="2.10.70.10">
    <property type="entry name" value="Complement Module, domain 1"/>
    <property type="match status" value="3"/>
</dbReference>
<dbReference type="Gene3D" id="3.40.50.410">
    <property type="entry name" value="von Willebrand factor, type A domain"/>
    <property type="match status" value="1"/>
</dbReference>
<dbReference type="InterPro" id="IPR011360">
    <property type="entry name" value="Compl_C2_B"/>
</dbReference>
<dbReference type="InterPro" id="IPR009003">
    <property type="entry name" value="Peptidase_S1_PA"/>
</dbReference>
<dbReference type="InterPro" id="IPR001314">
    <property type="entry name" value="Peptidase_S1A"/>
</dbReference>
<dbReference type="InterPro" id="IPR035976">
    <property type="entry name" value="Sushi/SCR/CCP_sf"/>
</dbReference>
<dbReference type="InterPro" id="IPR000436">
    <property type="entry name" value="Sushi_SCR_CCP_dom"/>
</dbReference>
<dbReference type="InterPro" id="IPR001254">
    <property type="entry name" value="Trypsin_dom"/>
</dbReference>
<dbReference type="InterPro" id="IPR018114">
    <property type="entry name" value="TRYPSIN_HIS"/>
</dbReference>
<dbReference type="InterPro" id="IPR033116">
    <property type="entry name" value="TRYPSIN_SER"/>
</dbReference>
<dbReference type="InterPro" id="IPR002035">
    <property type="entry name" value="VWF_A"/>
</dbReference>
<dbReference type="InterPro" id="IPR036465">
    <property type="entry name" value="vWFA_dom_sf"/>
</dbReference>
<dbReference type="PANTHER" id="PTHR46393:SF1">
    <property type="entry name" value="COMPLEMENT FACTOR B"/>
    <property type="match status" value="1"/>
</dbReference>
<dbReference type="PANTHER" id="PTHR46393">
    <property type="entry name" value="SUSHI DOMAIN-CONTAINING PROTEIN"/>
    <property type="match status" value="1"/>
</dbReference>
<dbReference type="Pfam" id="PF00084">
    <property type="entry name" value="Sushi"/>
    <property type="match status" value="3"/>
</dbReference>
<dbReference type="Pfam" id="PF00089">
    <property type="entry name" value="Trypsin"/>
    <property type="match status" value="1"/>
</dbReference>
<dbReference type="Pfam" id="PF00092">
    <property type="entry name" value="VWA"/>
    <property type="match status" value="1"/>
</dbReference>
<dbReference type="PIRSF" id="PIRSF001154">
    <property type="entry name" value="Compl_C2_B"/>
    <property type="match status" value="1"/>
</dbReference>
<dbReference type="PRINTS" id="PR00722">
    <property type="entry name" value="CHYMOTRYPSIN"/>
</dbReference>
<dbReference type="PRINTS" id="PR00453">
    <property type="entry name" value="VWFADOMAIN"/>
</dbReference>
<dbReference type="SMART" id="SM00032">
    <property type="entry name" value="CCP"/>
    <property type="match status" value="3"/>
</dbReference>
<dbReference type="SMART" id="SM00020">
    <property type="entry name" value="Tryp_SPc"/>
    <property type="match status" value="1"/>
</dbReference>
<dbReference type="SMART" id="SM00327">
    <property type="entry name" value="VWA"/>
    <property type="match status" value="1"/>
</dbReference>
<dbReference type="SUPFAM" id="SSF57535">
    <property type="entry name" value="Complement control module/SCR domain"/>
    <property type="match status" value="3"/>
</dbReference>
<dbReference type="SUPFAM" id="SSF50494">
    <property type="entry name" value="Trypsin-like serine proteases"/>
    <property type="match status" value="1"/>
</dbReference>
<dbReference type="SUPFAM" id="SSF53300">
    <property type="entry name" value="vWA-like"/>
    <property type="match status" value="1"/>
</dbReference>
<dbReference type="PROSITE" id="PS50923">
    <property type="entry name" value="SUSHI"/>
    <property type="match status" value="3"/>
</dbReference>
<dbReference type="PROSITE" id="PS50240">
    <property type="entry name" value="TRYPSIN_DOM"/>
    <property type="match status" value="1"/>
</dbReference>
<dbReference type="PROSITE" id="PS00134">
    <property type="entry name" value="TRYPSIN_HIS"/>
    <property type="match status" value="1"/>
</dbReference>
<dbReference type="PROSITE" id="PS00135">
    <property type="entry name" value="TRYPSIN_SER"/>
    <property type="match status" value="1"/>
</dbReference>
<dbReference type="PROSITE" id="PS50234">
    <property type="entry name" value="VWFA"/>
    <property type="match status" value="1"/>
</dbReference>
<sequence>MGSNLSPQLCLMPFILGLLSGGVTTTPWPLAQPQESCSLEGVEIKGGSFRLLQEGQALEYVCPSGFYPYPVQTRTCRSTGSWSTLKTQVQKTVRKAECRAIHCPRPHDFENGEYWPRSPYYNVSDEISFHCYDGYTLRGSANRTCQVNGRWSGQTAICDNGAGYCSNPGIPIGTRKVGSQYRLEDSVTYHCSRGLTLRGSQRRTCQEGGSWSGTEPSCQDSFMYDTPQEVAEAFLSSLTETIEGVDAEDGHGPGEQQKRKIVLDPSGSMNIYLVLDGSDSIGASNFTGAKKCLVNLIEKVASYGVKPRYGLVTYATHPKIWVKVSDPDSSNADWVTKQLNEINYEDHKLKSGTNTKKALQAVYSMMSWPDDIPPEGWNRTRHVIILMTDGLHNMGGDPITVIDEIRDLLYIGKDRKNPREDYLDVYVFGVGPLVNQVNINALASKKDNEQHVFKVKDMENLEDVFYQMIDESQSLSLCGMVWEHRKGTDYHKQPWQAKISVIRPSKGHESCMGAVVSEYFVLTAAHCFTVDDKEHSIKVSVGGEKRDLEIEVVLFHPNYNINGKKAAGIPEFYDYDVALIKLKNKLKYGQTIRPICLPCTEGTTRALRLPPTTTCQQQKEELLPAQDIKALFVSEEEKKLTRKEVYIKNGDKKGSCERDAQYAPGYDKVKDISEVVTPRFLCTGGVSPYADPNTCRGDSGGPLIVHKRSRFIQVGVISWGVVDVCKNQKRQKQVPAHARDFHINLFQVLPWLKEKLQDEDLGFL</sequence>
<comment type="function">
    <text evidence="1">Precursor of the catalytic component of the C3 and C5 convertase complexes of the alternative pathway of the complement system, a cascade of proteins that leads to phagocytosis and breakdown of pathogens and signaling that strengthens the adaptive immune system. The alternative complement pathway acts as an amplification loop that enhances other complement pathways (classical, lectin and GZMK) by promoting formation of additional C3 and C5 convertases. CFB is cleaved and activated by CFD to generate Ba and Bb chains; Bb chain constituting the catalytic component of the C3 and C5 convertases.</text>
</comment>
<comment type="function">
    <molecule>Complement factor B Bb</molecule>
    <text evidence="1">Serine protease component of the complement C3 and C5 convertase complexes of the alternative complement pathway. Following cleavage and activation by factor D (CFD), forms the C3 convertase together with complement C3b. As part of the C3 convertase, cleaves and activates C3 into C3a anaphylatoxin and C3b opsonin, the next components of the complement pathways. When an additional complement C3b molecule binds to the C3 convertase, forms the C5 convertase, which cleaves and activates C5 into C5a anaphylatoxin and C5b component of the membrane attack complex.</text>
</comment>
<comment type="function">
    <molecule>Complement factor B Ba</molecule>
    <text evidence="1">Involved in proliferation and differentiation of preactivated B-lymphocytes, rapid spreading of peripheral blood monocytes, stimulation of lymphocyte blastogenesis and lysis of erythrocytes.</text>
</comment>
<comment type="catalytic activity">
    <molecule>Complement factor B Bb</molecule>
    <reaction evidence="1">
        <text>Cleavage of Arg-|-Ser bond in complement component C3 alpha-chain to yield C3a and C3b, and Arg-|-Xaa bond in complement component C5 alpha-chain to yield C5a and C5b.</text>
        <dbReference type="EC" id="3.4.21.47"/>
    </reaction>
</comment>
<comment type="cofactor">
    <molecule>Complement factor B Bb</molecule>
    <cofactor evidence="1">
        <name>Mg(2+)</name>
        <dbReference type="ChEBI" id="CHEBI:18420"/>
    </cofactor>
    <cofactor evidence="1">
        <name>Mn(2+)</name>
        <dbReference type="ChEBI" id="CHEBI:29035"/>
    </cofactor>
</comment>
<comment type="subunit">
    <text evidence="1">Monomer. Interacts with complement C3b; this interaction is dependent on the presence of Mg(2+).</text>
</comment>
<comment type="subunit">
    <molecule>Complement factor B Bb</molecule>
    <text evidence="1">Catalytic component of the C3 convertase of the alternative complement pathway, also named C3bBb, composed of complement factor B Bb and complement C3b. Catalytic component of the C5 convertase of the alternative complement pathway, also named C3bBb3b, composed of complement factor B Bb and additional molecules of complement C3b. Interacts to CFP; this interaction contributes to the stabilization of the active C3-convertase enzyme complex.</text>
</comment>
<comment type="subcellular location">
    <subcellularLocation>
        <location evidence="1">Secreted</location>
    </subcellularLocation>
</comment>
<comment type="subcellular location">
    <molecule>Complement factor B Bb</molecule>
    <subcellularLocation>
        <location evidence="1">Cell surface</location>
    </subcellularLocation>
    <text evidence="1">Recruited to the surface of pathogens by complement C3b opsonin.</text>
</comment>
<comment type="domain">
    <text evidence="1">The unliganded VWA domain has an inactive 'locked' conformation whereby the scissile Arg-259|Lys-260 bond is protected from proteolytic activation.</text>
</comment>
<comment type="PTM">
    <text evidence="1">Cleaved by CFD following activation of the alternative complement system, generating Ba and Bb chains. Cleavage and activation takes place when CFB is already associated with complement C3b.</text>
</comment>
<comment type="similarity">
    <text evidence="4">Belongs to the peptidase S1 family.</text>
</comment>
<organism>
    <name type="scientific">Pan troglodytes</name>
    <name type="common">Chimpanzee</name>
    <dbReference type="NCBI Taxonomy" id="9598"/>
    <lineage>
        <taxon>Eukaryota</taxon>
        <taxon>Metazoa</taxon>
        <taxon>Chordata</taxon>
        <taxon>Craniata</taxon>
        <taxon>Vertebrata</taxon>
        <taxon>Euteleostomi</taxon>
        <taxon>Mammalia</taxon>
        <taxon>Eutheria</taxon>
        <taxon>Euarchontoglires</taxon>
        <taxon>Primates</taxon>
        <taxon>Haplorrhini</taxon>
        <taxon>Catarrhini</taxon>
        <taxon>Hominidae</taxon>
        <taxon>Pan</taxon>
    </lineage>
</organism>
<reference key="1">
    <citation type="submission" date="2002-01" db="EMBL/GenBank/DDBJ databases">
        <title>Comparative analysis of human and primate complement C2 and factor B genes.</title>
        <authorList>
            <person name="Schneider P.M."/>
            <person name="Tantalaki E."/>
            <person name="Stradmann-Bellinghausen B."/>
            <person name="Rittner C."/>
        </authorList>
    </citation>
    <scope>NUCLEOTIDE SEQUENCE [GENOMIC DNA]</scope>
    <source>
        <tissue>Blood</tissue>
    </source>
</reference>
<name>CFAB_PANTR</name>